<proteinExistence type="inferred from homology"/>
<evidence type="ECO:0000255" key="1">
    <source>
        <dbReference type="HAMAP-Rule" id="MF_00770"/>
    </source>
</evidence>
<reference key="1">
    <citation type="journal article" date="2006" name="J. Bacteriol.">
        <title>Complete genome sequence of Yersinia pestis strains Antiqua and Nepal516: evidence of gene reduction in an emerging pathogen.</title>
        <authorList>
            <person name="Chain P.S.G."/>
            <person name="Hu P."/>
            <person name="Malfatti S.A."/>
            <person name="Radnedge L."/>
            <person name="Larimer F."/>
            <person name="Vergez L.M."/>
            <person name="Worsham P."/>
            <person name="Chu M.C."/>
            <person name="Andersen G.L."/>
        </authorList>
    </citation>
    <scope>NUCLEOTIDE SEQUENCE [LARGE SCALE GENOMIC DNA]</scope>
    <source>
        <strain>Nepal516</strain>
    </source>
</reference>
<reference key="2">
    <citation type="submission" date="2009-04" db="EMBL/GenBank/DDBJ databases">
        <title>Yersinia pestis Nepal516A whole genome shotgun sequencing project.</title>
        <authorList>
            <person name="Plunkett G. III"/>
            <person name="Anderson B.D."/>
            <person name="Baumler D.J."/>
            <person name="Burland V."/>
            <person name="Cabot E.L."/>
            <person name="Glasner J.D."/>
            <person name="Mau B."/>
            <person name="Neeno-Eckwall E."/>
            <person name="Perna N.T."/>
            <person name="Munk A.C."/>
            <person name="Tapia R."/>
            <person name="Green L.D."/>
            <person name="Rogers Y.C."/>
            <person name="Detter J.C."/>
            <person name="Bruce D.C."/>
            <person name="Brettin T.S."/>
        </authorList>
    </citation>
    <scope>NUCLEOTIDE SEQUENCE [LARGE SCALE GENOMIC DNA]</scope>
    <source>
        <strain>Nepal516</strain>
    </source>
</reference>
<protein>
    <recommendedName>
        <fullName evidence="1">Rhamnulose-1-phosphate aldolase</fullName>
        <ecNumber evidence="1">4.1.2.19</ecNumber>
    </recommendedName>
</protein>
<gene>
    <name evidence="1" type="primary">rhaD</name>
    <name type="ordered locus">YPN_3342</name>
    <name type="ORF">YP516_3799</name>
</gene>
<feature type="chain" id="PRO_1000017347" description="Rhamnulose-1-phosphate aldolase">
    <location>
        <begin position="1"/>
        <end position="274"/>
    </location>
</feature>
<feature type="active site" evidence="1">
    <location>
        <position position="117"/>
    </location>
</feature>
<feature type="binding site" evidence="1">
    <location>
        <position position="141"/>
    </location>
    <ligand>
        <name>Zn(2+)</name>
        <dbReference type="ChEBI" id="CHEBI:29105"/>
    </ligand>
</feature>
<feature type="binding site" evidence="1">
    <location>
        <position position="143"/>
    </location>
    <ligand>
        <name>Zn(2+)</name>
        <dbReference type="ChEBI" id="CHEBI:29105"/>
    </ligand>
</feature>
<feature type="binding site" evidence="1">
    <location>
        <position position="212"/>
    </location>
    <ligand>
        <name>Zn(2+)</name>
        <dbReference type="ChEBI" id="CHEBI:29105"/>
    </ligand>
</feature>
<comment type="function">
    <text evidence="1">Catalyzes the reversible cleavage of L-rhamnulose-1-phosphate to dihydroxyacetone phosphate (DHAP) and L-lactaldehyde.</text>
</comment>
<comment type="catalytic activity">
    <reaction evidence="1">
        <text>L-rhamnulose 1-phosphate = (S)-lactaldehyde + dihydroxyacetone phosphate</text>
        <dbReference type="Rhea" id="RHEA:19689"/>
        <dbReference type="ChEBI" id="CHEBI:18041"/>
        <dbReference type="ChEBI" id="CHEBI:57642"/>
        <dbReference type="ChEBI" id="CHEBI:58313"/>
        <dbReference type="EC" id="4.1.2.19"/>
    </reaction>
</comment>
<comment type="cofactor">
    <cofactor evidence="1">
        <name>Zn(2+)</name>
        <dbReference type="ChEBI" id="CHEBI:29105"/>
    </cofactor>
    <text evidence="1">Binds 1 zinc ion per subunit.</text>
</comment>
<comment type="pathway">
    <text evidence="1">Carbohydrate degradation; L-rhamnose degradation; glycerone phosphate from L-rhamnose: step 3/3.</text>
</comment>
<comment type="subunit">
    <text evidence="1">Homotetramer.</text>
</comment>
<comment type="subcellular location">
    <subcellularLocation>
        <location evidence="1">Cytoplasm</location>
    </subcellularLocation>
</comment>
<comment type="similarity">
    <text evidence="1">Belongs to the aldolase class II family. RhaD subfamily.</text>
</comment>
<sequence length="274" mass="30352">MQAILSSWFIQGMIKATSDMWHKGWDERNGGNISLRLLAEEVEPYRRDFYQQPRKVELTQPAPELANSWFLVTGSGKFFRNVELNPAENLVLLQVSNDGMAYHIHWGLTQGGLPTSELAAHFQSHIVRMQVSGGTNRVIMHCHATNLIALSYVQKLENASFTRLLWEGSTECLVVFPDGIGIVPWMVPGTDGIGTQTAEQMREHSLVLWPFHGIFGSGPTLDDAFGLIDTAEKSAEIMVKVLSMGGKKQTISREQLIALAARFDVTPMAAALDA</sequence>
<accession>Q1CEB1</accession>
<accession>C4GY60</accession>
<organism>
    <name type="scientific">Yersinia pestis bv. Antiqua (strain Nepal516)</name>
    <dbReference type="NCBI Taxonomy" id="377628"/>
    <lineage>
        <taxon>Bacteria</taxon>
        <taxon>Pseudomonadati</taxon>
        <taxon>Pseudomonadota</taxon>
        <taxon>Gammaproteobacteria</taxon>
        <taxon>Enterobacterales</taxon>
        <taxon>Yersiniaceae</taxon>
        <taxon>Yersinia</taxon>
    </lineage>
</organism>
<keyword id="KW-0963">Cytoplasm</keyword>
<keyword id="KW-0456">Lyase</keyword>
<keyword id="KW-0479">Metal-binding</keyword>
<keyword id="KW-0684">Rhamnose metabolism</keyword>
<keyword id="KW-0862">Zinc</keyword>
<name>RHAD_YERPN</name>
<dbReference type="EC" id="4.1.2.19" evidence="1"/>
<dbReference type="EMBL" id="CP000305">
    <property type="protein sequence ID" value="ABG19669.1"/>
    <property type="molecule type" value="Genomic_DNA"/>
</dbReference>
<dbReference type="EMBL" id="ACNQ01000017">
    <property type="protein sequence ID" value="EEO75860.1"/>
    <property type="molecule type" value="Genomic_DNA"/>
</dbReference>
<dbReference type="RefSeq" id="WP_002209103.1">
    <property type="nucleotide sequence ID" value="NZ_ACNQ01000017.1"/>
</dbReference>
<dbReference type="SMR" id="Q1CEB1"/>
<dbReference type="GeneID" id="57974277"/>
<dbReference type="KEGG" id="ypn:YPN_3342"/>
<dbReference type="HOGENOM" id="CLU_076831_0_0_6"/>
<dbReference type="UniPathway" id="UPA00541">
    <property type="reaction ID" value="UER00603"/>
</dbReference>
<dbReference type="Proteomes" id="UP000008936">
    <property type="component" value="Chromosome"/>
</dbReference>
<dbReference type="GO" id="GO:0005829">
    <property type="term" value="C:cytosol"/>
    <property type="evidence" value="ECO:0007669"/>
    <property type="project" value="TreeGrafter"/>
</dbReference>
<dbReference type="GO" id="GO:0046872">
    <property type="term" value="F:metal ion binding"/>
    <property type="evidence" value="ECO:0007669"/>
    <property type="project" value="UniProtKB-KW"/>
</dbReference>
<dbReference type="GO" id="GO:0008994">
    <property type="term" value="F:rhamnulose-1-phosphate aldolase activity"/>
    <property type="evidence" value="ECO:0007669"/>
    <property type="project" value="UniProtKB-UniRule"/>
</dbReference>
<dbReference type="GO" id="GO:0019323">
    <property type="term" value="P:pentose catabolic process"/>
    <property type="evidence" value="ECO:0007669"/>
    <property type="project" value="TreeGrafter"/>
</dbReference>
<dbReference type="GO" id="GO:0019301">
    <property type="term" value="P:rhamnose catabolic process"/>
    <property type="evidence" value="ECO:0007669"/>
    <property type="project" value="UniProtKB-UniRule"/>
</dbReference>
<dbReference type="CDD" id="cd00398">
    <property type="entry name" value="Aldolase_II"/>
    <property type="match status" value="1"/>
</dbReference>
<dbReference type="FunFam" id="3.40.225.10:FF:000006">
    <property type="entry name" value="Rhamnulose-1-phosphate aldolase"/>
    <property type="match status" value="1"/>
</dbReference>
<dbReference type="Gene3D" id="3.40.225.10">
    <property type="entry name" value="Class II aldolase/adducin N-terminal domain"/>
    <property type="match status" value="1"/>
</dbReference>
<dbReference type="HAMAP" id="MF_00770">
    <property type="entry name" value="RhaD"/>
    <property type="match status" value="1"/>
</dbReference>
<dbReference type="InterPro" id="IPR050197">
    <property type="entry name" value="Aldolase_class_II_sugar_metab"/>
</dbReference>
<dbReference type="InterPro" id="IPR001303">
    <property type="entry name" value="Aldolase_II/adducin_N"/>
</dbReference>
<dbReference type="InterPro" id="IPR036409">
    <property type="entry name" value="Aldolase_II/adducin_N_sf"/>
</dbReference>
<dbReference type="InterPro" id="IPR013447">
    <property type="entry name" value="Rhamnulose-1-P_Aldolase"/>
</dbReference>
<dbReference type="NCBIfam" id="NF002963">
    <property type="entry name" value="PRK03634.1"/>
    <property type="match status" value="1"/>
</dbReference>
<dbReference type="NCBIfam" id="TIGR02624">
    <property type="entry name" value="rhamnu_1P_ald"/>
    <property type="match status" value="1"/>
</dbReference>
<dbReference type="PANTHER" id="PTHR22789">
    <property type="entry name" value="FUCULOSE PHOSPHATE ALDOLASE"/>
    <property type="match status" value="1"/>
</dbReference>
<dbReference type="PANTHER" id="PTHR22789:SF16">
    <property type="entry name" value="RHAMNULOSE-1-PHOSPHATE ALDOLASE"/>
    <property type="match status" value="1"/>
</dbReference>
<dbReference type="Pfam" id="PF00596">
    <property type="entry name" value="Aldolase_II"/>
    <property type="match status" value="1"/>
</dbReference>
<dbReference type="SMART" id="SM01007">
    <property type="entry name" value="Aldolase_II"/>
    <property type="match status" value="1"/>
</dbReference>
<dbReference type="SUPFAM" id="SSF53639">
    <property type="entry name" value="AraD/HMP-PK domain-like"/>
    <property type="match status" value="1"/>
</dbReference>